<sequence length="219" mass="23930">MSSHLVEPPPPLHNNNNNCEENEQSLPPPAGLNSSWVELPMNSSNGNDNGNGKNGGLEHVPSSSSIHNGDMEKILLDAQHESGQSSSRGSSHCDSPSPQEDGQIMFDVEMHTSRDHSSQSEEEVVEGEKEVEALKKSADWVSDWSSRPENIPPKEFHFRHPKRSVSLSMRKSGAMKKGGIFSAEFLKVFIPSLFLSHVLALGLGIYIGKRLSTPSASTY</sequence>
<organism>
    <name type="scientific">Homo sapiens</name>
    <name type="common">Human</name>
    <dbReference type="NCBI Taxonomy" id="9606"/>
    <lineage>
        <taxon>Eukaryota</taxon>
        <taxon>Metazoa</taxon>
        <taxon>Chordata</taxon>
        <taxon>Craniata</taxon>
        <taxon>Vertebrata</taxon>
        <taxon>Euteleostomi</taxon>
        <taxon>Mammalia</taxon>
        <taxon>Eutheria</taxon>
        <taxon>Euarchontoglires</taxon>
        <taxon>Primates</taxon>
        <taxon>Haplorrhini</taxon>
        <taxon>Catarrhini</taxon>
        <taxon>Hominidae</taxon>
        <taxon>Homo</taxon>
    </lineage>
</organism>
<dbReference type="EMBL" id="AB004788">
    <property type="protein sequence ID" value="BAA28692.1"/>
    <property type="molecule type" value="mRNA"/>
</dbReference>
<dbReference type="EMBL" id="AF079221">
    <property type="protein sequence ID" value="AAC27723.1"/>
    <property type="molecule type" value="mRNA"/>
</dbReference>
<dbReference type="EMBL" id="AF067396">
    <property type="protein sequence ID" value="AAD03589.1"/>
    <property type="molecule type" value="mRNA"/>
</dbReference>
<dbReference type="EMBL" id="AF536326">
    <property type="protein sequence ID" value="AAN04051.1"/>
    <property type="molecule type" value="mRNA"/>
</dbReference>
<dbReference type="EMBL" id="AF452712">
    <property type="protein sequence ID" value="AAL50978.1"/>
    <property type="molecule type" value="mRNA"/>
</dbReference>
<dbReference type="EMBL" id="AF255051">
    <property type="protein sequence ID" value="AAF70290.1"/>
    <property type="molecule type" value="Genomic_DNA"/>
</dbReference>
<dbReference type="EMBL" id="AK315870">
    <property type="protein sequence ID" value="BAF98761.1"/>
    <property type="molecule type" value="mRNA"/>
</dbReference>
<dbReference type="EMBL" id="AK316315">
    <property type="protein sequence ID" value="BAH14686.1"/>
    <property type="molecule type" value="mRNA"/>
</dbReference>
<dbReference type="EMBL" id="BT019501">
    <property type="protein sequence ID" value="AAV38308.1"/>
    <property type="molecule type" value="mRNA"/>
</dbReference>
<dbReference type="EMBL" id="AL132665">
    <property type="protein sequence ID" value="CAI46217.1"/>
    <property type="status" value="ALT_SEQ"/>
    <property type="molecule type" value="mRNA"/>
</dbReference>
<dbReference type="EMBL" id="AC011726">
    <property type="status" value="NOT_ANNOTATED_CDS"/>
    <property type="molecule type" value="Genomic_DNA"/>
</dbReference>
<dbReference type="EMBL" id="AC015743">
    <property type="status" value="NOT_ANNOTATED_CDS"/>
    <property type="molecule type" value="Genomic_DNA"/>
</dbReference>
<dbReference type="EMBL" id="AC022911">
    <property type="status" value="NOT_ANNOTATED_CDS"/>
    <property type="molecule type" value="Genomic_DNA"/>
</dbReference>
<dbReference type="EMBL" id="BC001559">
    <property type="protein sequence ID" value="AAH01559.1"/>
    <property type="molecule type" value="mRNA"/>
</dbReference>
<dbReference type="EMBL" id="BC009603">
    <property type="protein sequence ID" value="AAH09603.1"/>
    <property type="molecule type" value="mRNA"/>
</dbReference>
<dbReference type="CCDS" id="CCDS6050.1">
    <molecule id="O60238-1"/>
</dbReference>
<dbReference type="CCDS" id="CCDS83267.1">
    <molecule id="O60238-2"/>
</dbReference>
<dbReference type="PIR" id="T34523">
    <property type="entry name" value="T34523"/>
</dbReference>
<dbReference type="RefSeq" id="NP_001317420.1">
    <molecule id="O60238-2"/>
    <property type="nucleotide sequence ID" value="NM_001330491.2"/>
</dbReference>
<dbReference type="RefSeq" id="NP_004322.1">
    <molecule id="O60238-1"/>
    <property type="nucleotide sequence ID" value="NM_004331.3"/>
</dbReference>
<dbReference type="SMR" id="O60238"/>
<dbReference type="BioGRID" id="107133">
    <property type="interactions" value="82"/>
</dbReference>
<dbReference type="DIP" id="DIP-35187N"/>
<dbReference type="FunCoup" id="O60238">
    <property type="interactions" value="3163"/>
</dbReference>
<dbReference type="IntAct" id="O60238">
    <property type="interactions" value="51"/>
</dbReference>
<dbReference type="MINT" id="O60238"/>
<dbReference type="STRING" id="9606.ENSP00000370003"/>
<dbReference type="TCDB" id="1.A.20.1.2">
    <property type="family name" value="the bcl2/adenovirus e1b-interacting protein 3 (bnip3) family"/>
</dbReference>
<dbReference type="GlyGen" id="O60238">
    <property type="glycosylation" value="1 site, 1 O-linked glycan (1 site)"/>
</dbReference>
<dbReference type="iPTMnet" id="O60238"/>
<dbReference type="PhosphoSitePlus" id="O60238"/>
<dbReference type="BioMuta" id="BNIP3L"/>
<dbReference type="jPOST" id="O60238"/>
<dbReference type="MassIVE" id="O60238"/>
<dbReference type="PaxDb" id="9606-ENSP00000370003"/>
<dbReference type="PeptideAtlas" id="O60238"/>
<dbReference type="ProteomicsDB" id="2536"/>
<dbReference type="ProteomicsDB" id="49267">
    <molecule id="O60238-1"/>
</dbReference>
<dbReference type="Pumba" id="O60238"/>
<dbReference type="Antibodypedia" id="2292">
    <property type="antibodies" value="465 antibodies from 42 providers"/>
</dbReference>
<dbReference type="DNASU" id="665"/>
<dbReference type="Ensembl" id="ENST00000380629.7">
    <molecule id="O60238-1"/>
    <property type="protein sequence ID" value="ENSP00000370003.2"/>
    <property type="gene ID" value="ENSG00000104765.16"/>
</dbReference>
<dbReference type="Ensembl" id="ENST00000518611.5">
    <molecule id="O60238-2"/>
    <property type="protein sequence ID" value="ENSP00000429851.1"/>
    <property type="gene ID" value="ENSG00000104765.16"/>
</dbReference>
<dbReference type="Ensembl" id="ENST00000520409.5">
    <molecule id="O60238-2"/>
    <property type="protein sequence ID" value="ENSP00000428597.1"/>
    <property type="gene ID" value="ENSG00000104765.16"/>
</dbReference>
<dbReference type="Ensembl" id="ENST00000523515.5">
    <molecule id="O60238-2"/>
    <property type="protein sequence ID" value="ENSP00000429698.1"/>
    <property type="gene ID" value="ENSG00000104765.16"/>
</dbReference>
<dbReference type="GeneID" id="665"/>
<dbReference type="KEGG" id="hsa:665"/>
<dbReference type="MANE-Select" id="ENST00000380629.7">
    <property type="protein sequence ID" value="ENSP00000370003.2"/>
    <property type="RefSeq nucleotide sequence ID" value="NM_004331.3"/>
    <property type="RefSeq protein sequence ID" value="NP_004322.1"/>
</dbReference>
<dbReference type="UCSC" id="uc003xey.3">
    <molecule id="O60238-1"/>
    <property type="organism name" value="human"/>
</dbReference>
<dbReference type="AGR" id="HGNC:1085"/>
<dbReference type="CTD" id="665"/>
<dbReference type="DisGeNET" id="665"/>
<dbReference type="GeneCards" id="BNIP3L"/>
<dbReference type="HGNC" id="HGNC:1085">
    <property type="gene designation" value="BNIP3L"/>
</dbReference>
<dbReference type="HPA" id="ENSG00000104765">
    <property type="expression patterns" value="Low tissue specificity"/>
</dbReference>
<dbReference type="MIM" id="605368">
    <property type="type" value="gene"/>
</dbReference>
<dbReference type="neXtProt" id="NX_O60238"/>
<dbReference type="OpenTargets" id="ENSG00000104765"/>
<dbReference type="PharmGKB" id="PA25395"/>
<dbReference type="VEuPathDB" id="HostDB:ENSG00000104765"/>
<dbReference type="eggNOG" id="ENOG502R8Q5">
    <property type="taxonomic scope" value="Eukaryota"/>
</dbReference>
<dbReference type="GeneTree" id="ENSGT00390000013415"/>
<dbReference type="HOGENOM" id="CLU_091463_1_1_1"/>
<dbReference type="InParanoid" id="O60238"/>
<dbReference type="OMA" id="EAVEDHY"/>
<dbReference type="OrthoDB" id="5857140at2759"/>
<dbReference type="PAN-GO" id="O60238">
    <property type="GO annotations" value="7 GO annotations based on evolutionary models"/>
</dbReference>
<dbReference type="PhylomeDB" id="O60238"/>
<dbReference type="TreeFam" id="TF315424"/>
<dbReference type="PathwayCommons" id="O60238"/>
<dbReference type="Reactome" id="R-HSA-6803204">
    <property type="pathway name" value="TP53 Regulates Transcription of Genes Involved in Cytochrome C Release"/>
</dbReference>
<dbReference type="SignaLink" id="O60238"/>
<dbReference type="SIGNOR" id="O60238"/>
<dbReference type="BioGRID-ORCS" id="665">
    <property type="hits" value="14 hits in 1164 CRISPR screens"/>
</dbReference>
<dbReference type="ChiTaRS" id="BNIP3L">
    <property type="organism name" value="human"/>
</dbReference>
<dbReference type="GeneWiki" id="BNIP3L"/>
<dbReference type="GenomeRNAi" id="665"/>
<dbReference type="Pharos" id="O60238">
    <property type="development level" value="Tbio"/>
</dbReference>
<dbReference type="PRO" id="PR:O60238"/>
<dbReference type="Proteomes" id="UP000005640">
    <property type="component" value="Chromosome 8"/>
</dbReference>
<dbReference type="RNAct" id="O60238">
    <property type="molecule type" value="protein"/>
</dbReference>
<dbReference type="Bgee" id="ENSG00000104765">
    <property type="expression patterns" value="Expressed in trabecular bone tissue and 210 other cell types or tissues"/>
</dbReference>
<dbReference type="ExpressionAtlas" id="O60238">
    <property type="expression patterns" value="baseline and differential"/>
</dbReference>
<dbReference type="GO" id="GO:0005783">
    <property type="term" value="C:endoplasmic reticulum"/>
    <property type="evidence" value="ECO:0000314"/>
    <property type="project" value="UniProtKB"/>
</dbReference>
<dbReference type="GO" id="GO:0016020">
    <property type="term" value="C:membrane"/>
    <property type="evidence" value="ECO:0000304"/>
    <property type="project" value="UniProtKB"/>
</dbReference>
<dbReference type="GO" id="GO:0005741">
    <property type="term" value="C:mitochondrial outer membrane"/>
    <property type="evidence" value="ECO:0000315"/>
    <property type="project" value="UniProtKB"/>
</dbReference>
<dbReference type="GO" id="GO:0005739">
    <property type="term" value="C:mitochondrion"/>
    <property type="evidence" value="ECO:0000314"/>
    <property type="project" value="HPA"/>
</dbReference>
<dbReference type="GO" id="GO:0005635">
    <property type="term" value="C:nuclear envelope"/>
    <property type="evidence" value="ECO:0000314"/>
    <property type="project" value="UniProtKB"/>
</dbReference>
<dbReference type="GO" id="GO:0016607">
    <property type="term" value="C:nuclear speck"/>
    <property type="evidence" value="ECO:0000314"/>
    <property type="project" value="HPA"/>
</dbReference>
<dbReference type="GO" id="GO:0005634">
    <property type="term" value="C:nucleus"/>
    <property type="evidence" value="ECO:0000318"/>
    <property type="project" value="GO_Central"/>
</dbReference>
<dbReference type="GO" id="GO:0042802">
    <property type="term" value="F:identical protein binding"/>
    <property type="evidence" value="ECO:0000353"/>
    <property type="project" value="IntAct"/>
</dbReference>
<dbReference type="GO" id="GO:0005521">
    <property type="term" value="F:lamin binding"/>
    <property type="evidence" value="ECO:0000314"/>
    <property type="project" value="UniProtKB"/>
</dbReference>
<dbReference type="GO" id="GO:0042803">
    <property type="term" value="F:protein homodimerization activity"/>
    <property type="evidence" value="ECO:0000314"/>
    <property type="project" value="UniProtKB"/>
</dbReference>
<dbReference type="GO" id="GO:0071456">
    <property type="term" value="P:cellular response to hypoxia"/>
    <property type="evidence" value="ECO:0000316"/>
    <property type="project" value="MGI"/>
</dbReference>
<dbReference type="GO" id="GO:0051607">
    <property type="term" value="P:defense response to virus"/>
    <property type="evidence" value="ECO:0000314"/>
    <property type="project" value="UniProtKB"/>
</dbReference>
<dbReference type="GO" id="GO:0097345">
    <property type="term" value="P:mitochondrial outer membrane permeabilization"/>
    <property type="evidence" value="ECO:0000318"/>
    <property type="project" value="GO_Central"/>
</dbReference>
<dbReference type="GO" id="GO:0035694">
    <property type="term" value="P:mitochondrial protein catabolic process"/>
    <property type="evidence" value="ECO:0000315"/>
    <property type="project" value="UniProtKB"/>
</dbReference>
<dbReference type="GO" id="GO:0043066">
    <property type="term" value="P:negative regulation of apoptotic process"/>
    <property type="evidence" value="ECO:0000314"/>
    <property type="project" value="UniProtKB"/>
</dbReference>
<dbReference type="GO" id="GO:0010917">
    <property type="term" value="P:negative regulation of mitochondrial membrane potential"/>
    <property type="evidence" value="ECO:0007669"/>
    <property type="project" value="Ensembl"/>
</dbReference>
<dbReference type="GO" id="GO:0043069">
    <property type="term" value="P:negative regulation of programmed cell death"/>
    <property type="evidence" value="ECO:0000316"/>
    <property type="project" value="MGI"/>
</dbReference>
<dbReference type="GO" id="GO:0043065">
    <property type="term" value="P:positive regulation of apoptotic process"/>
    <property type="evidence" value="ECO:0000314"/>
    <property type="project" value="UniProtKB"/>
</dbReference>
<dbReference type="GO" id="GO:0016239">
    <property type="term" value="P:positive regulation of macroautophagy"/>
    <property type="evidence" value="ECO:0000316"/>
    <property type="project" value="MGI"/>
</dbReference>
<dbReference type="GO" id="GO:1901524">
    <property type="term" value="P:regulation of mitophagy"/>
    <property type="evidence" value="ECO:0007669"/>
    <property type="project" value="Ensembl"/>
</dbReference>
<dbReference type="GO" id="GO:0043067">
    <property type="term" value="P:regulation of programmed cell death"/>
    <property type="evidence" value="ECO:0000318"/>
    <property type="project" value="GO_Central"/>
</dbReference>
<dbReference type="GO" id="GO:1903214">
    <property type="term" value="P:regulation of protein targeting to mitochondrion"/>
    <property type="evidence" value="ECO:0007669"/>
    <property type="project" value="Ensembl"/>
</dbReference>
<dbReference type="Gene3D" id="6.10.250.1020">
    <property type="match status" value="1"/>
</dbReference>
<dbReference type="InterPro" id="IPR010548">
    <property type="entry name" value="BNIP3"/>
</dbReference>
<dbReference type="PANTHER" id="PTHR15186:SF3">
    <property type="entry name" value="BCL2_ADENOVIRUS E1B 19 KDA PROTEIN-INTERACTING PROTEIN 3-LIKE"/>
    <property type="match status" value="1"/>
</dbReference>
<dbReference type="PANTHER" id="PTHR15186">
    <property type="entry name" value="RE48077P"/>
    <property type="match status" value="1"/>
</dbReference>
<dbReference type="Pfam" id="PF06553">
    <property type="entry name" value="BNIP3"/>
    <property type="match status" value="1"/>
</dbReference>
<protein>
    <recommendedName>
        <fullName>BCL2/adenovirus E1B 19 kDa protein-interacting protein 3-like</fullName>
    </recommendedName>
    <alternativeName>
        <fullName>Adenovirus E1B19K-binding protein B5</fullName>
    </alternativeName>
    <alternativeName>
        <fullName>BCL2/adenovirus E1B 19 kDa protein-interacting protein 3A</fullName>
    </alternativeName>
    <alternativeName>
        <fullName>NIP3-like protein X</fullName>
        <shortName>NIP3L</shortName>
    </alternativeName>
</protein>
<comment type="function">
    <text evidence="4 6">Induces apoptosis. Interacts with viral and cellular anti-apoptosis proteins. Can overcome the suppressors BCL-2 and BCL-XL, although high levels of BCL-XL expression will inhibit apoptosis. Inhibits apoptosis induced by BNIP3. Involved in mitochondrial quality control via its interaction with SPATA18/MIEAP: in response to mitochondrial damage, participates in mitochondrial protein catabolic process (also named MALM) leading to the degradation of damaged proteins inside mitochondria. The physical interaction of SPATA18/MIEAP, BNIP3 and BNIP3L/NIX at the mitochondrial outer membrane regulates the opening of a pore in the mitochondrial double membrane in order to mediate the translocation of lysosomal proteins from the cytoplasm to the mitochondrial matrix. May function as a tumor suppressor.</text>
</comment>
<comment type="subunit">
    <text evidence="4 5 6 8">Self-associates. Interacts with BNIP3 and STEAP3. Interacts (via BH3 domain) with SPATA18 (via coiled-coil domains). Interacts with PPTC7; this interaction promotes BNIP3L degradation (PubMed:38992176).</text>
</comment>
<comment type="subunit">
    <text evidence="4">(Microbial infection) Interacts with human adenovirus-2 E1B 19 kDa protein.</text>
</comment>
<comment type="subunit">
    <text evidence="7">(Microbial infection) Interacts with Kaposi's sarcoma-associated herpesvirus protein VIRF-1.</text>
</comment>
<comment type="interaction">
    <interactant intactId="EBI-849893">
        <id>O60238</id>
    </interactant>
    <interactant intactId="EBI-10827839">
        <id>Q15848</id>
        <label>ADIPOQ</label>
    </interactant>
    <organismsDiffer>false</organismsDiffer>
    <experiments>3</experiments>
</comment>
<comment type="interaction">
    <interactant intactId="EBI-849893">
        <id>O60238</id>
    </interactant>
    <interactant intactId="EBI-6308763">
        <id>Q9NQ11</id>
        <label>ATP13A2</label>
    </interactant>
    <organismsDiffer>false</organismsDiffer>
    <experiments>2</experiments>
</comment>
<comment type="interaction">
    <interactant intactId="EBI-849893">
        <id>O60238</id>
    </interactant>
    <interactant intactId="EBI-700771">
        <id>Q92934</id>
        <label>BAD</label>
    </interactant>
    <organismsDiffer>false</organismsDiffer>
    <experiments>2</experiments>
</comment>
<comment type="interaction">
    <interactant intactId="EBI-849893">
        <id>O60238</id>
    </interactant>
    <interactant intactId="EBI-77694">
        <id>P10415</id>
        <label>BCL2</label>
    </interactant>
    <organismsDiffer>false</organismsDiffer>
    <experiments>2</experiments>
</comment>
<comment type="interaction">
    <interactant intactId="EBI-849893">
        <id>O60238</id>
    </interactant>
    <interactant intactId="EBI-749464">
        <id>Q12983</id>
        <label>BNIP3</label>
    </interactant>
    <organismsDiffer>false</organismsDiffer>
    <experiments>24</experiments>
</comment>
<comment type="interaction">
    <interactant intactId="EBI-849893">
        <id>O60238</id>
    </interactant>
    <interactant intactId="EBI-849893">
        <id>O60238</id>
        <label>BNIP3L</label>
    </interactant>
    <organismsDiffer>false</organismsDiffer>
    <experiments>11</experiments>
</comment>
<comment type="interaction">
    <interactant intactId="EBI-849893">
        <id>O60238</id>
    </interactant>
    <interactant intactId="EBI-3939278">
        <id>Q9BXN2</id>
        <label>CLEC7A</label>
    </interactant>
    <organismsDiffer>false</organismsDiffer>
    <experiments>6</experiments>
</comment>
<comment type="interaction">
    <interactant intactId="EBI-849893">
        <id>O60238</id>
    </interactant>
    <interactant intactId="EBI-11989440">
        <id>Q9BXN2-6</id>
        <label>CLEC7A</label>
    </interactant>
    <organismsDiffer>false</organismsDiffer>
    <experiments>3</experiments>
</comment>
<comment type="interaction">
    <interactant intactId="EBI-849893">
        <id>O60238</id>
    </interactant>
    <interactant intactId="EBI-1058710">
        <id>O43169</id>
        <label>CYB5B</label>
    </interactant>
    <organismsDiffer>false</organismsDiffer>
    <experiments>3</experiments>
</comment>
<comment type="interaction">
    <interactant intactId="EBI-849893">
        <id>O60238</id>
    </interactant>
    <interactant intactId="EBI-743099">
        <id>Q969F0</id>
        <label>FATE1</label>
    </interactant>
    <organismsDiffer>false</organismsDiffer>
    <experiments>3</experiments>
</comment>
<comment type="interaction">
    <interactant intactId="EBI-849893">
        <id>O60238</id>
    </interactant>
    <interactant intactId="EBI-746969">
        <id>Q9H0R8</id>
        <label>GABARAPL1</label>
    </interactant>
    <organismsDiffer>false</organismsDiffer>
    <experiments>3</experiments>
</comment>
<comment type="interaction">
    <interactant intactId="EBI-849893">
        <id>O60238</id>
    </interactant>
    <interactant intactId="EBI-720116">
        <id>P60520</id>
        <label>GABARAPL2</label>
    </interactant>
    <organismsDiffer>false</organismsDiffer>
    <experiments>3</experiments>
</comment>
<comment type="interaction">
    <interactant intactId="EBI-849893">
        <id>O60238</id>
    </interactant>
    <interactant intactId="EBI-10173166">
        <id>Q5T700</id>
        <label>LDLRAD1</label>
    </interactant>
    <organismsDiffer>false</organismsDiffer>
    <experiments>4</experiments>
</comment>
<comment type="interaction">
    <interactant intactId="EBI-849893">
        <id>O60238</id>
    </interactant>
    <interactant intactId="EBI-750078">
        <id>Q13021</id>
        <label>MALL</label>
    </interactant>
    <organismsDiffer>false</organismsDiffer>
    <experiments>3</experiments>
</comment>
<comment type="interaction">
    <interactant intactId="EBI-849893">
        <id>O60238</id>
    </interactant>
    <interactant intactId="EBI-16085263">
        <id>P22736-1</id>
        <label>NR4A1</label>
    </interactant>
    <organismsDiffer>false</organismsDiffer>
    <experiments>4</experiments>
</comment>
<comment type="interaction">
    <interactant intactId="EBI-849893">
        <id>O60238</id>
    </interactant>
    <interactant intactId="EBI-8640191">
        <id>Q9NRQ5</id>
        <label>SMCO4</label>
    </interactant>
    <organismsDiffer>false</organismsDiffer>
    <experiments>7</experiments>
</comment>
<comment type="interaction">
    <interactant intactId="EBI-849893">
        <id>O60238</id>
    </interactant>
    <interactant intactId="EBI-723946">
        <id>P17152</id>
        <label>TMEM11</label>
    </interactant>
    <organismsDiffer>false</organismsDiffer>
    <experiments>9</experiments>
</comment>
<comment type="interaction">
    <interactant intactId="EBI-849893">
        <id>O60238</id>
    </interactant>
    <interactant intactId="EBI-10171534">
        <id>A0PK00</id>
        <label>TMEM120B</label>
    </interactant>
    <organismsDiffer>false</organismsDiffer>
    <experiments>3</experiments>
</comment>
<comment type="interaction">
    <interactant intactId="EBI-849893">
        <id>O60238</id>
    </interactant>
    <interactant intactId="EBI-10313040">
        <id>Q9NRS4</id>
        <label>TMPRSS4</label>
    </interactant>
    <organismsDiffer>false</organismsDiffer>
    <experiments>3</experiments>
</comment>
<comment type="interaction">
    <interactant intactId="EBI-849893">
        <id>O60238</id>
    </interactant>
    <interactant intactId="EBI-12003398">
        <id>Q9H2S6-2</id>
        <label>TNMD</label>
    </interactant>
    <organismsDiffer>false</organismsDiffer>
    <experiments>3</experiments>
</comment>
<comment type="interaction">
    <interactant intactId="EBI-849893">
        <id>O60238</id>
    </interactant>
    <interactant intactId="EBI-849856">
        <id>P03247</id>
        <label>E1B</label>
    </interactant>
    <organismsDiffer>true</organismsDiffer>
    <experiments>7</experiments>
</comment>
<comment type="interaction">
    <interactant intactId="EBI-849893">
        <id>O60238</id>
    </interactant>
    <interactant intactId="EBI-25475906">
        <id>A0A663DJA2</id>
        <label>ORF10</label>
    </interactant>
    <organismsDiffer>true</organismsDiffer>
    <experiments>4</experiments>
</comment>
<comment type="subcellular location">
    <subcellularLocation>
        <location>Nucleus envelope</location>
    </subcellularLocation>
    <subcellularLocation>
        <location>Endoplasmic reticulum</location>
    </subcellularLocation>
    <subcellularLocation>
        <location>Mitochondrion outer membrane</location>
    </subcellularLocation>
    <subcellularLocation>
        <location evidence="10">Membrane</location>
        <topology evidence="10">Single-pass membrane protein</topology>
    </subcellularLocation>
    <text>Colocalizes with SPATA18 at the mitochondrion outer membrane.</text>
</comment>
<comment type="alternative products">
    <event type="alternative splicing"/>
    <isoform>
        <id>O60238-1</id>
        <name>1</name>
        <sequence type="displayed"/>
    </isoform>
    <isoform>
        <id>O60238-2</id>
        <name>2</name>
        <sequence type="described" ref="VSP_056248"/>
    </isoform>
</comment>
<comment type="PTM">
    <text>Undergoes progressive proteolysis to an 11 kDa C-terminal fragment, which is blocked by the proteasome inhibitor lactacystin.</text>
</comment>
<comment type="similarity">
    <text evidence="10">Belongs to the NIP3 family.</text>
</comment>
<comment type="sequence caution" evidence="10">
    <conflict type="erroneous termination">
        <sequence resource="EMBL-CDS" id="CAI46217"/>
    </conflict>
    <text>Truncated C-terminus.</text>
</comment>
<comment type="online information" name="Atlas of Genetics and Cytogenetics in Oncology and Haematology">
    <link uri="https://atlasgeneticsoncology.org/gene/823/BNIP3L"/>
</comment>
<feature type="chain" id="PRO_0000064957" description="BCL2/adenovirus E1B 19 kDa protein-interacting protein 3-like">
    <location>
        <begin position="1"/>
        <end position="219"/>
    </location>
</feature>
<feature type="transmembrane region" description="Helical" evidence="2">
    <location>
        <begin position="188"/>
        <end position="208"/>
    </location>
</feature>
<feature type="region of interest" description="Disordered" evidence="3">
    <location>
        <begin position="1"/>
        <end position="101"/>
    </location>
</feature>
<feature type="short sequence motif" description="BH3">
    <location>
        <begin position="126"/>
        <end position="148"/>
    </location>
</feature>
<feature type="compositionally biased region" description="Low complexity" evidence="3">
    <location>
        <begin position="42"/>
        <end position="51"/>
    </location>
</feature>
<feature type="compositionally biased region" description="Basic and acidic residues" evidence="3">
    <location>
        <begin position="69"/>
        <end position="80"/>
    </location>
</feature>
<feature type="compositionally biased region" description="Low complexity" evidence="3">
    <location>
        <begin position="82"/>
        <end position="97"/>
    </location>
</feature>
<feature type="modified residue" description="Phosphoserine" evidence="12">
    <location>
        <position position="62"/>
    </location>
</feature>
<feature type="modified residue" description="Phosphoserine" evidence="1">
    <location>
        <position position="117"/>
    </location>
</feature>
<feature type="modified residue" description="Phosphoserine" evidence="12">
    <location>
        <position position="118"/>
    </location>
</feature>
<feature type="modified residue" description="Phosphoserine" evidence="11 12">
    <location>
        <position position="120"/>
    </location>
</feature>
<feature type="modified residue" description="Phosphoserine" evidence="13">
    <location>
        <position position="166"/>
    </location>
</feature>
<feature type="splice variant" id="VSP_056248" description="In isoform 2." evidence="9">
    <location>
        <begin position="1"/>
        <end position="40"/>
    </location>
</feature>
<feature type="sequence conflict" description="In Ref. 4; AAN04051." evidence="10" ref="4">
    <original>D</original>
    <variation>E</variation>
    <location>
        <position position="107"/>
    </location>
</feature>
<feature type="sequence conflict" description="In Ref. 9; CAI46217." evidence="10" ref="9">
    <original>N</original>
    <variation>S</variation>
    <location>
        <position position="150"/>
    </location>
</feature>
<keyword id="KW-0025">Alternative splicing</keyword>
<keyword id="KW-0053">Apoptosis</keyword>
<keyword id="KW-0256">Endoplasmic reticulum</keyword>
<keyword id="KW-0945">Host-virus interaction</keyword>
<keyword id="KW-0472">Membrane</keyword>
<keyword id="KW-0496">Mitochondrion</keyword>
<keyword id="KW-1000">Mitochondrion outer membrane</keyword>
<keyword id="KW-0539">Nucleus</keyword>
<keyword id="KW-0597">Phosphoprotein</keyword>
<keyword id="KW-1267">Proteomics identification</keyword>
<keyword id="KW-1185">Reference proteome</keyword>
<keyword id="KW-0812">Transmembrane</keyword>
<keyword id="KW-1133">Transmembrane helix</keyword>
<evidence type="ECO:0000250" key="1">
    <source>
        <dbReference type="UniProtKB" id="Q9Z2F7"/>
    </source>
</evidence>
<evidence type="ECO:0000255" key="2"/>
<evidence type="ECO:0000256" key="3">
    <source>
        <dbReference type="SAM" id="MobiDB-lite"/>
    </source>
</evidence>
<evidence type="ECO:0000269" key="4">
    <source>
    </source>
</evidence>
<evidence type="ECO:0000269" key="5">
    <source>
    </source>
</evidence>
<evidence type="ECO:0000269" key="6">
    <source>
    </source>
</evidence>
<evidence type="ECO:0000269" key="7">
    <source>
    </source>
</evidence>
<evidence type="ECO:0000269" key="8">
    <source>
    </source>
</evidence>
<evidence type="ECO:0000303" key="9">
    <source>
    </source>
</evidence>
<evidence type="ECO:0000305" key="10"/>
<evidence type="ECO:0007744" key="11">
    <source>
    </source>
</evidence>
<evidence type="ECO:0007744" key="12">
    <source>
    </source>
</evidence>
<evidence type="ECO:0007744" key="13">
    <source>
    </source>
</evidence>
<proteinExistence type="evidence at protein level"/>
<accession>O60238</accession>
<accession>B0AZS9</accession>
<accession>Q5JW63</accession>
<accession>Q8NF87</accession>
<name>BNI3L_HUMAN</name>
<reference key="1">
    <citation type="journal article" date="1998" name="Genes Chromosomes Cancer">
        <title>Isolation, mapping, and functional analysis of a novel human cDNA (BNIP3L) encoding a protein homologous to human NIP3.</title>
        <authorList>
            <person name="Matsushima M."/>
            <person name="Fujiwara T."/>
            <person name="Takahashi E."/>
            <person name="Minaguchi T."/>
            <person name="Eguchi Y."/>
            <person name="Tsujimoto Y."/>
            <person name="Suzumori K."/>
            <person name="Nakamura Y."/>
        </authorList>
    </citation>
    <scope>NUCLEOTIDE SEQUENCE [MRNA] (ISOFORM 1)</scope>
</reference>
<reference key="2">
    <citation type="submission" date="1998-07" db="EMBL/GenBank/DDBJ databases">
        <title>BNIP3a, a human homolog of pro-apoptotic protein BNIP3, promotes apoptosis and interacts with viral and cellular anti-apoptosis proteins.</title>
        <authorList>
            <person name="Yasuda M."/>
            <person name="Han J.-W."/>
            <person name="Dionne C.A."/>
            <person name="Boyd J.M."/>
            <person name="Chinnadurai G."/>
        </authorList>
    </citation>
    <scope>NUCLEOTIDE SEQUENCE [MRNA] (ISOFORM 1)</scope>
</reference>
<reference key="3">
    <citation type="journal article" date="1999" name="J. Biol. Chem.">
        <title>Nix and Nip3 form a subfamily of pro-apoptotic mitochondrial proteins.</title>
        <authorList>
            <person name="Chen G."/>
            <person name="Cizeau J."/>
            <person name="Vande Velde C."/>
            <person name="Park J.H."/>
            <person name="Bozek G."/>
            <person name="Bolton J."/>
            <person name="Shi L."/>
            <person name="Dubik D."/>
            <person name="Greenberg A."/>
        </authorList>
    </citation>
    <scope>NUCLEOTIDE SEQUENCE [MRNA] (ISOFORM 1)</scope>
    <source>
        <tissue>Fetal liver</tissue>
    </source>
</reference>
<reference key="4">
    <citation type="journal article" date="1999" name="Cell Death Differ.">
        <title>A novel adenovirus E1B19K-binding protein B5 inhibits apoptosis induced by Nip3 by forming a heterodimer through the C-terminal hydrophobic region.</title>
        <authorList>
            <person name="Ohi N."/>
            <person name="Tokunaga A."/>
            <person name="Tsunoda H."/>
            <person name="Nakano K."/>
            <person name="Haraguchi K."/>
            <person name="Oda K."/>
            <person name="Motoyama N."/>
            <person name="Nakajima T."/>
        </authorList>
    </citation>
    <scope>NUCLEOTIDE SEQUENCE [MRNA] (ISOFORM 1)</scope>
    <scope>FUNCTION</scope>
    <scope>SUBCELLULAR LOCATION</scope>
    <scope>SELF-ASSOCIATION</scope>
    <scope>INTERACTION WITH BNIP3 AND HUMAN ADENOVIRUS-2 E1B 19 KDA PROTEIN (MICROBIAL INFECTION)</scope>
</reference>
<reference key="5">
    <citation type="journal article" date="2003" name="Blood">
        <title>The proapoptotic factor Nix is coexpressed with Bcl-xL during terminal erythroid differentiation.</title>
        <authorList>
            <person name="Aerbajinai W."/>
            <person name="Giattina M."/>
            <person name="Lee Y.T."/>
            <person name="Raffeld M."/>
            <person name="Miller J.L."/>
        </authorList>
    </citation>
    <scope>NUCLEOTIDE SEQUENCE [MRNA] (ISOFORM 1)</scope>
</reference>
<reference key="6">
    <citation type="submission" date="2000-04" db="EMBL/GenBank/DDBJ databases">
        <title>A catalog of genes in the human dermal papilla cells as identified by expressed sequence tags.</title>
        <authorList>
            <person name="Farooq M."/>
            <person name="Kim M.K."/>
            <person name="Kim Y.H."/>
            <person name="Seo J.M."/>
            <person name="Lee H.M."/>
            <person name="Sohn M.Y."/>
            <person name="Hwang S.Y."/>
            <person name="Chung H.J."/>
            <person name="Im S.U."/>
            <person name="Jung E.J."/>
            <person name="Kim J.C."/>
        </authorList>
    </citation>
    <scope>NUCLEOTIDE SEQUENCE [GENOMIC DNA]</scope>
    <source>
        <tissue>Hair follicle dermal papilla</tissue>
    </source>
</reference>
<reference key="7">
    <citation type="journal article" date="2004" name="Nat. Genet.">
        <title>Complete sequencing and characterization of 21,243 full-length human cDNAs.</title>
        <authorList>
            <person name="Ota T."/>
            <person name="Suzuki Y."/>
            <person name="Nishikawa T."/>
            <person name="Otsuki T."/>
            <person name="Sugiyama T."/>
            <person name="Irie R."/>
            <person name="Wakamatsu A."/>
            <person name="Hayashi K."/>
            <person name="Sato H."/>
            <person name="Nagai K."/>
            <person name="Kimura K."/>
            <person name="Makita H."/>
            <person name="Sekine M."/>
            <person name="Obayashi M."/>
            <person name="Nishi T."/>
            <person name="Shibahara T."/>
            <person name="Tanaka T."/>
            <person name="Ishii S."/>
            <person name="Yamamoto J."/>
            <person name="Saito K."/>
            <person name="Kawai Y."/>
            <person name="Isono Y."/>
            <person name="Nakamura Y."/>
            <person name="Nagahari K."/>
            <person name="Murakami K."/>
            <person name="Yasuda T."/>
            <person name="Iwayanagi T."/>
            <person name="Wagatsuma M."/>
            <person name="Shiratori A."/>
            <person name="Sudo H."/>
            <person name="Hosoiri T."/>
            <person name="Kaku Y."/>
            <person name="Kodaira H."/>
            <person name="Kondo H."/>
            <person name="Sugawara M."/>
            <person name="Takahashi M."/>
            <person name="Kanda K."/>
            <person name="Yokoi T."/>
            <person name="Furuya T."/>
            <person name="Kikkawa E."/>
            <person name="Omura Y."/>
            <person name="Abe K."/>
            <person name="Kamihara K."/>
            <person name="Katsuta N."/>
            <person name="Sato K."/>
            <person name="Tanikawa M."/>
            <person name="Yamazaki M."/>
            <person name="Ninomiya K."/>
            <person name="Ishibashi T."/>
            <person name="Yamashita H."/>
            <person name="Murakawa K."/>
            <person name="Fujimori K."/>
            <person name="Tanai H."/>
            <person name="Kimata M."/>
            <person name="Watanabe M."/>
            <person name="Hiraoka S."/>
            <person name="Chiba Y."/>
            <person name="Ishida S."/>
            <person name="Ono Y."/>
            <person name="Takiguchi S."/>
            <person name="Watanabe S."/>
            <person name="Yosida M."/>
            <person name="Hotuta T."/>
            <person name="Kusano J."/>
            <person name="Kanehori K."/>
            <person name="Takahashi-Fujii A."/>
            <person name="Hara H."/>
            <person name="Tanase T.-O."/>
            <person name="Nomura Y."/>
            <person name="Togiya S."/>
            <person name="Komai F."/>
            <person name="Hara R."/>
            <person name="Takeuchi K."/>
            <person name="Arita M."/>
            <person name="Imose N."/>
            <person name="Musashino K."/>
            <person name="Yuuki H."/>
            <person name="Oshima A."/>
            <person name="Sasaki N."/>
            <person name="Aotsuka S."/>
            <person name="Yoshikawa Y."/>
            <person name="Matsunawa H."/>
            <person name="Ichihara T."/>
            <person name="Shiohata N."/>
            <person name="Sano S."/>
            <person name="Moriya S."/>
            <person name="Momiyama H."/>
            <person name="Satoh N."/>
            <person name="Takami S."/>
            <person name="Terashima Y."/>
            <person name="Suzuki O."/>
            <person name="Nakagawa S."/>
            <person name="Senoh A."/>
            <person name="Mizoguchi H."/>
            <person name="Goto Y."/>
            <person name="Shimizu F."/>
            <person name="Wakebe H."/>
            <person name="Hishigaki H."/>
            <person name="Watanabe T."/>
            <person name="Sugiyama A."/>
            <person name="Takemoto M."/>
            <person name="Kawakami B."/>
            <person name="Yamazaki M."/>
            <person name="Watanabe K."/>
            <person name="Kumagai A."/>
            <person name="Itakura S."/>
            <person name="Fukuzumi Y."/>
            <person name="Fujimori Y."/>
            <person name="Komiyama M."/>
            <person name="Tashiro H."/>
            <person name="Tanigami A."/>
            <person name="Fujiwara T."/>
            <person name="Ono T."/>
            <person name="Yamada K."/>
            <person name="Fujii Y."/>
            <person name="Ozaki K."/>
            <person name="Hirao M."/>
            <person name="Ohmori Y."/>
            <person name="Kawabata A."/>
            <person name="Hikiji T."/>
            <person name="Kobatake N."/>
            <person name="Inagaki H."/>
            <person name="Ikema Y."/>
            <person name="Okamoto S."/>
            <person name="Okitani R."/>
            <person name="Kawakami T."/>
            <person name="Noguchi S."/>
            <person name="Itoh T."/>
            <person name="Shigeta K."/>
            <person name="Senba T."/>
            <person name="Matsumura K."/>
            <person name="Nakajima Y."/>
            <person name="Mizuno T."/>
            <person name="Morinaga M."/>
            <person name="Sasaki M."/>
            <person name="Togashi T."/>
            <person name="Oyama M."/>
            <person name="Hata H."/>
            <person name="Watanabe M."/>
            <person name="Komatsu T."/>
            <person name="Mizushima-Sugano J."/>
            <person name="Satoh T."/>
            <person name="Shirai Y."/>
            <person name="Takahashi Y."/>
            <person name="Nakagawa K."/>
            <person name="Okumura K."/>
            <person name="Nagase T."/>
            <person name="Nomura N."/>
            <person name="Kikuchi H."/>
            <person name="Masuho Y."/>
            <person name="Yamashita R."/>
            <person name="Nakai K."/>
            <person name="Yada T."/>
            <person name="Nakamura Y."/>
            <person name="Ohara O."/>
            <person name="Isogai T."/>
            <person name="Sugano S."/>
        </authorList>
    </citation>
    <scope>NUCLEOTIDE SEQUENCE [LARGE SCALE MRNA] (ISOFORM 2)</scope>
    <source>
        <tissue>Brain</tissue>
    </source>
</reference>
<reference key="8">
    <citation type="submission" date="2004-10" db="EMBL/GenBank/DDBJ databases">
        <title>Cloning of human full-length CDSs in BD Creator(TM) system donor vector.</title>
        <authorList>
            <person name="Kalnine N."/>
            <person name="Chen X."/>
            <person name="Rolfs A."/>
            <person name="Halleck A."/>
            <person name="Hines L."/>
            <person name="Eisenstein S."/>
            <person name="Koundinya M."/>
            <person name="Raphael J."/>
            <person name="Moreira D."/>
            <person name="Kelley T."/>
            <person name="LaBaer J."/>
            <person name="Lin Y."/>
            <person name="Phelan M."/>
            <person name="Farmer A."/>
        </authorList>
    </citation>
    <scope>NUCLEOTIDE SEQUENCE [LARGE SCALE MRNA] (ISOFORM 1)</scope>
</reference>
<reference key="9">
    <citation type="journal article" date="2007" name="BMC Genomics">
        <title>The full-ORF clone resource of the German cDNA consortium.</title>
        <authorList>
            <person name="Bechtel S."/>
            <person name="Rosenfelder H."/>
            <person name="Duda A."/>
            <person name="Schmidt C.P."/>
            <person name="Ernst U."/>
            <person name="Wellenreuther R."/>
            <person name="Mehrle A."/>
            <person name="Schuster C."/>
            <person name="Bahr A."/>
            <person name="Bloecker H."/>
            <person name="Heubner D."/>
            <person name="Hoerlein A."/>
            <person name="Michel G."/>
            <person name="Wedler H."/>
            <person name="Koehrer K."/>
            <person name="Ottenwaelder B."/>
            <person name="Poustka A."/>
            <person name="Wiemann S."/>
            <person name="Schupp I."/>
        </authorList>
    </citation>
    <scope>NUCLEOTIDE SEQUENCE [LARGE SCALE MRNA] (ISOFORM 1)</scope>
    <source>
        <tissue>Kidney</tissue>
    </source>
</reference>
<reference key="10">
    <citation type="journal article" date="2006" name="Nature">
        <title>DNA sequence and analysis of human chromosome 8.</title>
        <authorList>
            <person name="Nusbaum C."/>
            <person name="Mikkelsen T.S."/>
            <person name="Zody M.C."/>
            <person name="Asakawa S."/>
            <person name="Taudien S."/>
            <person name="Garber M."/>
            <person name="Kodira C.D."/>
            <person name="Schueler M.G."/>
            <person name="Shimizu A."/>
            <person name="Whittaker C.A."/>
            <person name="Chang J.L."/>
            <person name="Cuomo C.A."/>
            <person name="Dewar K."/>
            <person name="FitzGerald M.G."/>
            <person name="Yang X."/>
            <person name="Allen N.R."/>
            <person name="Anderson S."/>
            <person name="Asakawa T."/>
            <person name="Blechschmidt K."/>
            <person name="Bloom T."/>
            <person name="Borowsky M.L."/>
            <person name="Butler J."/>
            <person name="Cook A."/>
            <person name="Corum B."/>
            <person name="DeArellano K."/>
            <person name="DeCaprio D."/>
            <person name="Dooley K.T."/>
            <person name="Dorris L. III"/>
            <person name="Engels R."/>
            <person name="Gloeckner G."/>
            <person name="Hafez N."/>
            <person name="Hagopian D.S."/>
            <person name="Hall J.L."/>
            <person name="Ishikawa S.K."/>
            <person name="Jaffe D.B."/>
            <person name="Kamat A."/>
            <person name="Kudoh J."/>
            <person name="Lehmann R."/>
            <person name="Lokitsang T."/>
            <person name="Macdonald P."/>
            <person name="Major J.E."/>
            <person name="Matthews C.D."/>
            <person name="Mauceli E."/>
            <person name="Menzel U."/>
            <person name="Mihalev A.H."/>
            <person name="Minoshima S."/>
            <person name="Murayama Y."/>
            <person name="Naylor J.W."/>
            <person name="Nicol R."/>
            <person name="Nguyen C."/>
            <person name="O'Leary S.B."/>
            <person name="O'Neill K."/>
            <person name="Parker S.C.J."/>
            <person name="Polley A."/>
            <person name="Raymond C.K."/>
            <person name="Reichwald K."/>
            <person name="Rodriguez J."/>
            <person name="Sasaki T."/>
            <person name="Schilhabel M."/>
            <person name="Siddiqui R."/>
            <person name="Smith C.L."/>
            <person name="Sneddon T.P."/>
            <person name="Talamas J.A."/>
            <person name="Tenzin P."/>
            <person name="Topham K."/>
            <person name="Venkataraman V."/>
            <person name="Wen G."/>
            <person name="Yamazaki S."/>
            <person name="Young S.K."/>
            <person name="Zeng Q."/>
            <person name="Zimmer A.R."/>
            <person name="Rosenthal A."/>
            <person name="Birren B.W."/>
            <person name="Platzer M."/>
            <person name="Shimizu N."/>
            <person name="Lander E.S."/>
        </authorList>
    </citation>
    <scope>NUCLEOTIDE SEQUENCE [LARGE SCALE GENOMIC DNA]</scope>
</reference>
<reference key="11">
    <citation type="journal article" date="2004" name="Genome Res.">
        <title>The status, quality, and expansion of the NIH full-length cDNA project: the Mammalian Gene Collection (MGC).</title>
        <authorList>
            <consortium name="The MGC Project Team"/>
        </authorList>
    </citation>
    <scope>NUCLEOTIDE SEQUENCE [LARGE SCALE MRNA] (ISOFORM 1)</scope>
    <source>
        <tissue>Bone marrow</tissue>
        <tissue>Cervix</tissue>
    </source>
</reference>
<reference key="12">
    <citation type="journal article" date="2003" name="Proc. Natl. Acad. Sci. U.S.A.">
        <title>The p53-inducible TSAP6 gene product regulates apoptosis and the cell cycle and interacts with Nix and the Myt1 kinase.</title>
        <authorList>
            <person name="Passer B.J."/>
            <person name="Nancy-Portebois V."/>
            <person name="Amzallag N."/>
            <person name="Prieur S."/>
            <person name="Cans C."/>
            <person name="Roborel de Climens A."/>
            <person name="Fiucci G."/>
            <person name="Bouvard V."/>
            <person name="Tuynder M."/>
            <person name="Susini L."/>
            <person name="Morchoisne S."/>
            <person name="Crible V."/>
            <person name="Lespagnol A."/>
            <person name="Dausset J."/>
            <person name="Oren M."/>
            <person name="Amson R."/>
            <person name="Telerman A."/>
        </authorList>
    </citation>
    <scope>INTERACTION WITH STEAP3</scope>
</reference>
<reference key="13">
    <citation type="journal article" date="2006" name="Cell">
        <title>Global, in vivo, and site-specific phosphorylation dynamics in signaling networks.</title>
        <authorList>
            <person name="Olsen J.V."/>
            <person name="Blagoev B."/>
            <person name="Gnad F."/>
            <person name="Macek B."/>
            <person name="Kumar C."/>
            <person name="Mortensen P."/>
            <person name="Mann M."/>
        </authorList>
    </citation>
    <scope>IDENTIFICATION BY MASS SPECTROMETRY [LARGE SCALE ANALYSIS]</scope>
    <source>
        <tissue>Cervix carcinoma</tissue>
    </source>
</reference>
<reference key="14">
    <citation type="journal article" date="2010" name="Sci. Signal.">
        <title>Quantitative phosphoproteomics reveals widespread full phosphorylation site occupancy during mitosis.</title>
        <authorList>
            <person name="Olsen J.V."/>
            <person name="Vermeulen M."/>
            <person name="Santamaria A."/>
            <person name="Kumar C."/>
            <person name="Miller M.L."/>
            <person name="Jensen L.J."/>
            <person name="Gnad F."/>
            <person name="Cox J."/>
            <person name="Jensen T.S."/>
            <person name="Nigg E.A."/>
            <person name="Brunak S."/>
            <person name="Mann M."/>
        </authorList>
    </citation>
    <scope>PHOSPHORYLATION [LARGE SCALE ANALYSIS] AT SER-120</scope>
    <scope>IDENTIFICATION BY MASS SPECTROMETRY [LARGE SCALE ANALYSIS]</scope>
    <source>
        <tissue>Cervix carcinoma</tissue>
    </source>
</reference>
<reference key="15">
    <citation type="journal article" date="2011" name="PLoS ONE">
        <title>Mieap, a p53-inducible protein, controls mitochondrial quality by repairing or eliminating unhealthy mitochondria.</title>
        <authorList>
            <person name="Kitamura N."/>
            <person name="Nakamura Y."/>
            <person name="Miyamoto Y."/>
            <person name="Miyamoto T."/>
            <person name="Kabu K."/>
            <person name="Yoshida M."/>
            <person name="Futamura M."/>
            <person name="Ichinose S."/>
            <person name="Arakawa H."/>
        </authorList>
    </citation>
    <scope>FUNCTION</scope>
    <scope>INTERACTION WITH SPATA18</scope>
    <scope>SUBCELLULAR LOCATION</scope>
</reference>
<reference key="16">
    <citation type="journal article" date="2013" name="J. Proteome Res.">
        <title>Toward a comprehensive characterization of a human cancer cell phosphoproteome.</title>
        <authorList>
            <person name="Zhou H."/>
            <person name="Di Palma S."/>
            <person name="Preisinger C."/>
            <person name="Peng M."/>
            <person name="Polat A.N."/>
            <person name="Heck A.J."/>
            <person name="Mohammed S."/>
        </authorList>
    </citation>
    <scope>PHOSPHORYLATION [LARGE SCALE ANALYSIS] AT SER-62; SER-118 AND SER-120</scope>
    <scope>IDENTIFICATION BY MASS SPECTROMETRY [LARGE SCALE ANALYSIS]</scope>
    <source>
        <tissue>Cervix carcinoma</tissue>
        <tissue>Erythroleukemia</tissue>
    </source>
</reference>
<reference key="17">
    <citation type="journal article" date="2014" name="J. Proteomics">
        <title>An enzyme assisted RP-RPLC approach for in-depth analysis of human liver phosphoproteome.</title>
        <authorList>
            <person name="Bian Y."/>
            <person name="Song C."/>
            <person name="Cheng K."/>
            <person name="Dong M."/>
            <person name="Wang F."/>
            <person name="Huang J."/>
            <person name="Sun D."/>
            <person name="Wang L."/>
            <person name="Ye M."/>
            <person name="Zou H."/>
        </authorList>
    </citation>
    <scope>PHOSPHORYLATION [LARGE SCALE ANALYSIS] AT SER-166</scope>
    <scope>IDENTIFICATION BY MASS SPECTROMETRY [LARGE SCALE ANALYSIS]</scope>
    <source>
        <tissue>Liver</tissue>
    </source>
</reference>
<reference key="18">
    <citation type="journal article" date="2019" name="Nat. Commun.">
        <title>Activation of NIX-mediated mitophagy by an interferon regulatory factor homologue of human herpesvirus.</title>
        <authorList>
            <person name="Vo M.T."/>
            <person name="Smith B.J."/>
            <person name="Nicholas J."/>
            <person name="Choi Y.B."/>
        </authorList>
    </citation>
    <scope>FUNCTION</scope>
    <scope>INTERACTION WITH KAPOSI'S SARCOMA-ASSOCIATED HERPESVIRUS PROTEIN VIRF-1 (MICROBIAL INFECTION)</scope>
</reference>
<reference key="19">
    <citation type="journal article" date="2024" name="EMBO Rep.">
        <title>PPTC7 antagonizes mitophagy by promoting BNIP3 and NIX degradation via SCFFBXL4.</title>
        <authorList>
            <person name="Nguyen-Dien G.T."/>
            <person name="Townsend B."/>
            <person name="Kulkarni P.G."/>
            <person name="Kozul K.L."/>
            <person name="Ooi S.S."/>
            <person name="Eldershaw D.N."/>
            <person name="Weeratunga S."/>
            <person name="Liu M."/>
            <person name="Jones M.J."/>
            <person name="Millard S.S."/>
            <person name="Ng D.C."/>
            <person name="Pagano M."/>
            <person name="Bonfim-Melo A."/>
            <person name="Schneider T."/>
            <person name="Komander D."/>
            <person name="Lazarou M."/>
            <person name="Collins B.M."/>
            <person name="Pagan J.K."/>
        </authorList>
    </citation>
    <scope>INTERACTION WITH PPTC7</scope>
</reference>
<gene>
    <name type="primary">BNIP3L</name>
    <name type="synonym">BNIP3A</name>
    <name type="synonym">BNIP3H</name>
    <name type="synonym">NIX</name>
</gene>